<comment type="similarity">
    <text evidence="1">Belongs to the UPF0637 family.</text>
</comment>
<accession>C3LI26</accession>
<dbReference type="EMBL" id="CP001215">
    <property type="protein sequence ID" value="ACP12371.1"/>
    <property type="molecule type" value="Genomic_DNA"/>
</dbReference>
<dbReference type="RefSeq" id="WP_000175083.1">
    <property type="nucleotide sequence ID" value="NC_012581.1"/>
</dbReference>
<dbReference type="SMR" id="C3LI26"/>
<dbReference type="KEGG" id="bah:BAMEG_4213"/>
<dbReference type="HOGENOM" id="CLU_096059_0_0_9"/>
<dbReference type="Gene3D" id="3.30.930.20">
    <property type="entry name" value="Protein of unknown function DUF1054"/>
    <property type="match status" value="1"/>
</dbReference>
<dbReference type="HAMAP" id="MF_01851">
    <property type="entry name" value="UPF0637"/>
    <property type="match status" value="1"/>
</dbReference>
<dbReference type="InterPro" id="IPR009403">
    <property type="entry name" value="UPF0637"/>
</dbReference>
<dbReference type="InterPro" id="IPR053707">
    <property type="entry name" value="UPF0637_domain_sf"/>
</dbReference>
<dbReference type="Pfam" id="PF06335">
    <property type="entry name" value="DUF1054"/>
    <property type="match status" value="1"/>
</dbReference>
<dbReference type="PIRSF" id="PIRSF021332">
    <property type="entry name" value="DUF1054"/>
    <property type="match status" value="1"/>
</dbReference>
<dbReference type="SUPFAM" id="SSF142913">
    <property type="entry name" value="YktB/PF0168-like"/>
    <property type="match status" value="1"/>
</dbReference>
<gene>
    <name type="ordered locus">BAMEG_4213</name>
</gene>
<name>Y4213_BACAC</name>
<evidence type="ECO:0000255" key="1">
    <source>
        <dbReference type="HAMAP-Rule" id="MF_01851"/>
    </source>
</evidence>
<organism>
    <name type="scientific">Bacillus anthracis (strain CDC 684 / NRRL 3495)</name>
    <dbReference type="NCBI Taxonomy" id="568206"/>
    <lineage>
        <taxon>Bacteria</taxon>
        <taxon>Bacillati</taxon>
        <taxon>Bacillota</taxon>
        <taxon>Bacilli</taxon>
        <taxon>Bacillales</taxon>
        <taxon>Bacillaceae</taxon>
        <taxon>Bacillus</taxon>
        <taxon>Bacillus cereus group</taxon>
    </lineage>
</organism>
<feature type="chain" id="PRO_1000188666" description="UPF0637 protein BAMEG_4213">
    <location>
        <begin position="1"/>
        <end position="208"/>
    </location>
</feature>
<proteinExistence type="inferred from homology"/>
<protein>
    <recommendedName>
        <fullName evidence="1">UPF0637 protein BAMEG_4213</fullName>
    </recommendedName>
</protein>
<reference key="1">
    <citation type="submission" date="2008-10" db="EMBL/GenBank/DDBJ databases">
        <title>Genome sequence of Bacillus anthracis str. CDC 684.</title>
        <authorList>
            <person name="Dodson R.J."/>
            <person name="Munk A.C."/>
            <person name="Brettin T."/>
            <person name="Bruce D."/>
            <person name="Detter C."/>
            <person name="Tapia R."/>
            <person name="Han C."/>
            <person name="Sutton G."/>
            <person name="Sims D."/>
        </authorList>
    </citation>
    <scope>NUCLEOTIDE SEQUENCE [LARGE SCALE GENOMIC DNA]</scope>
    <source>
        <strain>CDC 684 / NRRL 3495</strain>
    </source>
</reference>
<sequence length="208" mass="24034">MTLQTFKSTDFEVFTVDGLEERMSAIKTNIHPKLEALGEQFAAYLSKQTDENFFYHVAKHARRKVNPPNDTWVAFSTNKRGYKMLPHFQIGLWGTHAFIYFGLIYECPQKVETAHAFLEHLNDLKTNIPNDFVWSIDHTKPSVKLHKTLETEDLQKMIERLATVKKAELLVGIHISPEEFSAMTNEQFLAKIESTMQSLLPLYALCNR</sequence>